<reference key="1">
    <citation type="journal article" date="2001" name="Mol. Biol. Evol.">
        <title>Mechanisms for evolving hypervariability: the case of conopeptides.</title>
        <authorList>
            <person name="Conticello S.G."/>
            <person name="Gilad Y."/>
            <person name="Avidan N."/>
            <person name="Ben-Asher E."/>
            <person name="Levy Z."/>
            <person name="Fainzilber M."/>
        </authorList>
    </citation>
    <scope>NUCLEOTIDE SEQUENCE [MRNA]</scope>
    <source>
        <tissue>Venom duct</tissue>
    </source>
</reference>
<organism>
    <name type="scientific">Conus textile</name>
    <name type="common">Cloth-of-gold cone</name>
    <dbReference type="NCBI Taxonomy" id="6494"/>
    <lineage>
        <taxon>Eukaryota</taxon>
        <taxon>Metazoa</taxon>
        <taxon>Spiralia</taxon>
        <taxon>Lophotrochozoa</taxon>
        <taxon>Mollusca</taxon>
        <taxon>Gastropoda</taxon>
        <taxon>Caenogastropoda</taxon>
        <taxon>Neogastropoda</taxon>
        <taxon>Conoidea</taxon>
        <taxon>Conidae</taxon>
        <taxon>Conus</taxon>
        <taxon>Cylinder</taxon>
    </lineage>
</organism>
<name>O16M_CONTE</name>
<sequence length="76" mass="8464">MKLTCMMIVAVLFLTAWTFVTAVPHSSNALENLYLKAHHEMNNPEDSELNKRCYDGGTSCDSGIQCCSGWCIFVCL</sequence>
<evidence type="ECO:0000250" key="1"/>
<evidence type="ECO:0000255" key="2"/>
<evidence type="ECO:0000305" key="3"/>
<protein>
    <recommendedName>
        <fullName>Omega-conotoxin-like TxMKLT1-0211</fullName>
    </recommendedName>
</protein>
<feature type="signal peptide" evidence="2">
    <location>
        <begin position="1"/>
        <end position="22"/>
    </location>
</feature>
<feature type="propeptide" id="PRO_0000315468" evidence="1">
    <location>
        <begin position="23"/>
        <end position="52"/>
    </location>
</feature>
<feature type="peptide" id="PRO_0000315469" description="Omega-conotoxin-like TxMKLT1-0211">
    <location>
        <begin position="53"/>
        <end position="76"/>
    </location>
</feature>
<feature type="disulfide bond" evidence="1">
    <location>
        <begin position="53"/>
        <end position="67"/>
    </location>
</feature>
<feature type="disulfide bond" evidence="1">
    <location>
        <begin position="60"/>
        <end position="71"/>
    </location>
</feature>
<feature type="disulfide bond" evidence="1">
    <location>
        <begin position="66"/>
        <end position="75"/>
    </location>
</feature>
<accession>Q9U648</accession>
<comment type="function">
    <text evidence="1">Omega-conotoxins act at presynaptic membranes, they bind and block voltage-gated calcium channels (Cav).</text>
</comment>
<comment type="subcellular location">
    <subcellularLocation>
        <location evidence="1">Secreted</location>
    </subcellularLocation>
</comment>
<comment type="tissue specificity">
    <text>Expressed by the venom duct.</text>
</comment>
<comment type="domain">
    <text evidence="1">The presence of a 'disulfide through disulfide knot' structurally defines this protein as a knottin.</text>
</comment>
<comment type="domain">
    <text>The cysteine framework is VI/VII (C-C-CC-C-C).</text>
</comment>
<comment type="similarity">
    <text evidence="3">Belongs to the conotoxin O1 superfamily.</text>
</comment>
<proteinExistence type="evidence at transcript level"/>
<dbReference type="EMBL" id="AF193268">
    <property type="protein sequence ID" value="AAF07979.1"/>
    <property type="molecule type" value="mRNA"/>
</dbReference>
<dbReference type="ConoServer" id="1101">
    <property type="toxin name" value="TxMKLT1-0211 precursor"/>
</dbReference>
<dbReference type="GO" id="GO:0005576">
    <property type="term" value="C:extracellular region"/>
    <property type="evidence" value="ECO:0007669"/>
    <property type="project" value="UniProtKB-SubCell"/>
</dbReference>
<dbReference type="GO" id="GO:0044231">
    <property type="term" value="C:host cell presynaptic membrane"/>
    <property type="evidence" value="ECO:0007669"/>
    <property type="project" value="UniProtKB-KW"/>
</dbReference>
<dbReference type="GO" id="GO:0005246">
    <property type="term" value="F:calcium channel regulator activity"/>
    <property type="evidence" value="ECO:0007669"/>
    <property type="project" value="UniProtKB-KW"/>
</dbReference>
<dbReference type="GO" id="GO:0008200">
    <property type="term" value="F:ion channel inhibitor activity"/>
    <property type="evidence" value="ECO:0007669"/>
    <property type="project" value="InterPro"/>
</dbReference>
<dbReference type="GO" id="GO:0090729">
    <property type="term" value="F:toxin activity"/>
    <property type="evidence" value="ECO:0007669"/>
    <property type="project" value="UniProtKB-KW"/>
</dbReference>
<dbReference type="InterPro" id="IPR004214">
    <property type="entry name" value="Conotoxin"/>
</dbReference>
<dbReference type="InterPro" id="IPR012321">
    <property type="entry name" value="Conotoxin_omega-typ_CS"/>
</dbReference>
<dbReference type="Pfam" id="PF02950">
    <property type="entry name" value="Conotoxin"/>
    <property type="match status" value="1"/>
</dbReference>
<dbReference type="PROSITE" id="PS60004">
    <property type="entry name" value="OMEGA_CONOTOXIN"/>
    <property type="match status" value="1"/>
</dbReference>
<keyword id="KW-0108">Calcium channel impairing toxin</keyword>
<keyword id="KW-0165">Cleavage on pair of basic residues</keyword>
<keyword id="KW-1015">Disulfide bond</keyword>
<keyword id="KW-0872">Ion channel impairing toxin</keyword>
<keyword id="KW-0960">Knottin</keyword>
<keyword id="KW-0528">Neurotoxin</keyword>
<keyword id="KW-0638">Presynaptic neurotoxin</keyword>
<keyword id="KW-0964">Secreted</keyword>
<keyword id="KW-0732">Signal</keyword>
<keyword id="KW-0800">Toxin</keyword>
<keyword id="KW-1218">Voltage-gated calcium channel impairing toxin</keyword>